<keyword id="KW-0028">Amino-acid biosynthesis</keyword>
<keyword id="KW-0055">Arginine biosynthesis</keyword>
<keyword id="KW-0170">Cobalt</keyword>
<keyword id="KW-0963">Cytoplasm</keyword>
<keyword id="KW-0378">Hydrolase</keyword>
<keyword id="KW-0479">Metal-binding</keyword>
<keyword id="KW-0862">Zinc</keyword>
<dbReference type="EC" id="3.5.1.16" evidence="1"/>
<dbReference type="EMBL" id="CP000247">
    <property type="protein sequence ID" value="ABG72126.1"/>
    <property type="molecule type" value="Genomic_DNA"/>
</dbReference>
<dbReference type="RefSeq" id="WP_001298411.1">
    <property type="nucleotide sequence ID" value="NC_008253.1"/>
</dbReference>
<dbReference type="SMR" id="Q0TAA3"/>
<dbReference type="MEROPS" id="M20.974"/>
<dbReference type="KEGG" id="ecp:ECP_4170"/>
<dbReference type="HOGENOM" id="CLU_021802_2_4_6"/>
<dbReference type="UniPathway" id="UPA00068">
    <property type="reaction ID" value="UER00110"/>
</dbReference>
<dbReference type="Proteomes" id="UP000009182">
    <property type="component" value="Chromosome"/>
</dbReference>
<dbReference type="GO" id="GO:0005737">
    <property type="term" value="C:cytoplasm"/>
    <property type="evidence" value="ECO:0007669"/>
    <property type="project" value="UniProtKB-SubCell"/>
</dbReference>
<dbReference type="GO" id="GO:0008777">
    <property type="term" value="F:acetylornithine deacetylase activity"/>
    <property type="evidence" value="ECO:0007669"/>
    <property type="project" value="UniProtKB-UniRule"/>
</dbReference>
<dbReference type="GO" id="GO:0008270">
    <property type="term" value="F:zinc ion binding"/>
    <property type="evidence" value="ECO:0007669"/>
    <property type="project" value="UniProtKB-UniRule"/>
</dbReference>
<dbReference type="GO" id="GO:0006526">
    <property type="term" value="P:L-arginine biosynthetic process"/>
    <property type="evidence" value="ECO:0007669"/>
    <property type="project" value="UniProtKB-UniRule"/>
</dbReference>
<dbReference type="CDD" id="cd03894">
    <property type="entry name" value="M20_ArgE"/>
    <property type="match status" value="1"/>
</dbReference>
<dbReference type="FunFam" id="3.30.70.360:FF:000003">
    <property type="entry name" value="Acetylornithine deacetylase"/>
    <property type="match status" value="1"/>
</dbReference>
<dbReference type="Gene3D" id="3.30.70.360">
    <property type="match status" value="1"/>
</dbReference>
<dbReference type="Gene3D" id="3.40.630.10">
    <property type="entry name" value="Zn peptidases"/>
    <property type="match status" value="1"/>
</dbReference>
<dbReference type="HAMAP" id="MF_01108">
    <property type="entry name" value="ArgE"/>
    <property type="match status" value="1"/>
</dbReference>
<dbReference type="InterPro" id="IPR010169">
    <property type="entry name" value="AcOrn-deacetyl"/>
</dbReference>
<dbReference type="InterPro" id="IPR001261">
    <property type="entry name" value="ArgE/DapE_CS"/>
</dbReference>
<dbReference type="InterPro" id="IPR036264">
    <property type="entry name" value="Bact_exopeptidase_dim_dom"/>
</dbReference>
<dbReference type="InterPro" id="IPR002933">
    <property type="entry name" value="Peptidase_M20"/>
</dbReference>
<dbReference type="InterPro" id="IPR011650">
    <property type="entry name" value="Peptidase_M20_dimer"/>
</dbReference>
<dbReference type="InterPro" id="IPR050072">
    <property type="entry name" value="Peptidase_M20A"/>
</dbReference>
<dbReference type="NCBIfam" id="TIGR01892">
    <property type="entry name" value="AcOrn-deacetyl"/>
    <property type="match status" value="1"/>
</dbReference>
<dbReference type="NCBIfam" id="NF003474">
    <property type="entry name" value="PRK05111.1"/>
    <property type="match status" value="1"/>
</dbReference>
<dbReference type="PANTHER" id="PTHR43808">
    <property type="entry name" value="ACETYLORNITHINE DEACETYLASE"/>
    <property type="match status" value="1"/>
</dbReference>
<dbReference type="PANTHER" id="PTHR43808:SF1">
    <property type="entry name" value="ACETYLORNITHINE DEACETYLASE"/>
    <property type="match status" value="1"/>
</dbReference>
<dbReference type="Pfam" id="PF07687">
    <property type="entry name" value="M20_dimer"/>
    <property type="match status" value="1"/>
</dbReference>
<dbReference type="Pfam" id="PF01546">
    <property type="entry name" value="Peptidase_M20"/>
    <property type="match status" value="1"/>
</dbReference>
<dbReference type="SUPFAM" id="SSF55031">
    <property type="entry name" value="Bacterial exopeptidase dimerisation domain"/>
    <property type="match status" value="1"/>
</dbReference>
<dbReference type="SUPFAM" id="SSF53187">
    <property type="entry name" value="Zn-dependent exopeptidases"/>
    <property type="match status" value="1"/>
</dbReference>
<dbReference type="PROSITE" id="PS00758">
    <property type="entry name" value="ARGE_DAPE_CPG2_1"/>
    <property type="match status" value="1"/>
</dbReference>
<dbReference type="PROSITE" id="PS00759">
    <property type="entry name" value="ARGE_DAPE_CPG2_2"/>
    <property type="match status" value="1"/>
</dbReference>
<organism>
    <name type="scientific">Escherichia coli O6:K15:H31 (strain 536 / UPEC)</name>
    <dbReference type="NCBI Taxonomy" id="362663"/>
    <lineage>
        <taxon>Bacteria</taxon>
        <taxon>Pseudomonadati</taxon>
        <taxon>Pseudomonadota</taxon>
        <taxon>Gammaproteobacteria</taxon>
        <taxon>Enterobacterales</taxon>
        <taxon>Enterobacteriaceae</taxon>
        <taxon>Escherichia</taxon>
    </lineage>
</organism>
<evidence type="ECO:0000255" key="1">
    <source>
        <dbReference type="HAMAP-Rule" id="MF_01108"/>
    </source>
</evidence>
<name>ARGE_ECOL5</name>
<gene>
    <name evidence="1" type="primary">argE</name>
    <name type="ordered locus">ECP_4170</name>
</gene>
<sequence>MKNKLPPFIEIYRALIATPSISATEEALDQSNADLITLLADWFKDLGFNVEVQPVPGTRNKFNMLASCGQGAGGLLLAGHTDTVPFDDGRWTRDPFTLTEHDGKLYGLGTADMKGFFAFILDALRDVDVTKLAKPLYILATADEETSMAGARYFAETTALRPDCAIIGEPTSLQPVRAHKGHISNAIRIQGQSGHSSDPARGVNAIELMHDAIGHILQLRDNLKERYHYDAFTVPYPTLNLGHIHGGDASNRICACCELHMDIRPLPGMTLNELNGLLNDALAPVSERWPGRLTVDELHPPIPGYECPPNHQLVEVVEKLLGAKTEVVNYCTEAPFIQTLCPTLVLGPGSINQAHQPDEYLETRFIKPTRELITQVIHHFCWH</sequence>
<accession>Q0TAA3</accession>
<protein>
    <recommendedName>
        <fullName evidence="1">Acetylornithine deacetylase</fullName>
        <shortName evidence="1">AO</shortName>
        <shortName evidence="1">Acetylornithinase</shortName>
        <ecNumber evidence="1">3.5.1.16</ecNumber>
    </recommendedName>
    <alternativeName>
        <fullName evidence="1">N-acetylornithinase</fullName>
        <shortName evidence="1">NAO</shortName>
    </alternativeName>
</protein>
<reference key="1">
    <citation type="journal article" date="2006" name="Mol. Microbiol.">
        <title>Role of pathogenicity island-associated integrases in the genome plasticity of uropathogenic Escherichia coli strain 536.</title>
        <authorList>
            <person name="Hochhut B."/>
            <person name="Wilde C."/>
            <person name="Balling G."/>
            <person name="Middendorf B."/>
            <person name="Dobrindt U."/>
            <person name="Brzuszkiewicz E."/>
            <person name="Gottschalk G."/>
            <person name="Carniel E."/>
            <person name="Hacker J."/>
        </authorList>
    </citation>
    <scope>NUCLEOTIDE SEQUENCE [LARGE SCALE GENOMIC DNA]</scope>
    <source>
        <strain>536 / UPEC</strain>
    </source>
</reference>
<comment type="function">
    <text evidence="1">Catalyzes the hydrolysis of the amide bond of N(2)-acetylated L-amino acids. Cleaves the acetyl group from N-acetyl-L-ornithine to form L-ornithine, an intermediate in L-arginine biosynthesis pathway, and a branchpoint in the synthesis of polyamines.</text>
</comment>
<comment type="catalytic activity">
    <reaction evidence="1">
        <text>N(2)-acetyl-L-ornithine + H2O = L-ornithine + acetate</text>
        <dbReference type="Rhea" id="RHEA:15941"/>
        <dbReference type="ChEBI" id="CHEBI:15377"/>
        <dbReference type="ChEBI" id="CHEBI:30089"/>
        <dbReference type="ChEBI" id="CHEBI:46911"/>
        <dbReference type="ChEBI" id="CHEBI:57805"/>
        <dbReference type="EC" id="3.5.1.16"/>
    </reaction>
</comment>
<comment type="cofactor">
    <cofactor evidence="1">
        <name>Zn(2+)</name>
        <dbReference type="ChEBI" id="CHEBI:29105"/>
    </cofactor>
    <cofactor evidence="1">
        <name>Co(2+)</name>
        <dbReference type="ChEBI" id="CHEBI:48828"/>
    </cofactor>
    <text evidence="1">Binds 2 Zn(2+) or Co(2+) ions per subunit.</text>
</comment>
<comment type="cofactor">
    <cofactor evidence="1">
        <name>glutathione</name>
        <dbReference type="ChEBI" id="CHEBI:57925"/>
    </cofactor>
</comment>
<comment type="pathway">
    <text evidence="1">Amino-acid biosynthesis; L-arginine biosynthesis; L-ornithine from N(2)-acetyl-L-ornithine (linear): step 1/1.</text>
</comment>
<comment type="subunit">
    <text evidence="1">Homodimer.</text>
</comment>
<comment type="subcellular location">
    <subcellularLocation>
        <location evidence="1">Cytoplasm</location>
    </subcellularLocation>
</comment>
<comment type="similarity">
    <text evidence="1">Belongs to the peptidase M20A family. ArgE subfamily.</text>
</comment>
<proteinExistence type="inferred from homology"/>
<feature type="chain" id="PRO_1000065056" description="Acetylornithine deacetylase">
    <location>
        <begin position="1"/>
        <end position="383"/>
    </location>
</feature>
<feature type="active site" evidence="1">
    <location>
        <position position="82"/>
    </location>
</feature>
<feature type="active site" evidence="1">
    <location>
        <position position="144"/>
    </location>
</feature>
<feature type="binding site" evidence="1">
    <location>
        <position position="80"/>
    </location>
    <ligand>
        <name>Zn(2+)</name>
        <dbReference type="ChEBI" id="CHEBI:29105"/>
        <label>1</label>
    </ligand>
</feature>
<feature type="binding site" evidence="1">
    <location>
        <position position="112"/>
    </location>
    <ligand>
        <name>Zn(2+)</name>
        <dbReference type="ChEBI" id="CHEBI:29105"/>
        <label>1</label>
    </ligand>
</feature>
<feature type="binding site" evidence="1">
    <location>
        <position position="112"/>
    </location>
    <ligand>
        <name>Zn(2+)</name>
        <dbReference type="ChEBI" id="CHEBI:29105"/>
        <label>2</label>
    </ligand>
</feature>
<feature type="binding site" evidence="1">
    <location>
        <position position="145"/>
    </location>
    <ligand>
        <name>Zn(2+)</name>
        <dbReference type="ChEBI" id="CHEBI:29105"/>
        <label>2</label>
    </ligand>
</feature>
<feature type="binding site" evidence="1">
    <location>
        <position position="169"/>
    </location>
    <ligand>
        <name>Zn(2+)</name>
        <dbReference type="ChEBI" id="CHEBI:29105"/>
        <label>1</label>
    </ligand>
</feature>
<feature type="binding site" evidence="1">
    <location>
        <position position="355"/>
    </location>
    <ligand>
        <name>Zn(2+)</name>
        <dbReference type="ChEBI" id="CHEBI:29105"/>
        <label>2</label>
    </ligand>
</feature>